<name>BL1S3_PIG</name>
<accession>A5A769</accession>
<proteinExistence type="evidence at transcript level"/>
<reference key="1">
    <citation type="submission" date="2006-09" db="EMBL/GenBank/DDBJ databases">
        <title>Sequences and genetic variations of fourty-four porcine coat color related genes.</title>
        <authorList>
            <person name="Okumura N."/>
            <person name="Matsumoto T."/>
            <person name="Hamasima N."/>
            <person name="Uenishi H."/>
            <person name="Ogawa T."/>
            <person name="Komatsuda A."/>
            <person name="Fukudome N."/>
            <person name="Ide H."/>
            <person name="Suzuki A."/>
            <person name="Kojima C."/>
            <person name="Awata T."/>
        </authorList>
    </citation>
    <scope>NUCLEOTIDE SEQUENCE [MRNA]</scope>
</reference>
<sequence>MASQSRRRRPLRRPETMVPGEAAETDSELSASSEEEELYLGPSGPTRGRPTGLRVAGEAAETDSDTEPEPKAAPRDLPPLVVQRETAGETWGEEETPAPAPALSLLQLRLAESQARLDHDVAAAVSGVYRRAGRDVAALAGRLAAAQAAGLAAAHSVRLARGDLCALAERLDIVAGCRLLPDIRGVPGTEPEQDPGPRA</sequence>
<dbReference type="EMBL" id="AB271939">
    <property type="protein sequence ID" value="BAF62314.1"/>
    <property type="molecule type" value="mRNA"/>
</dbReference>
<dbReference type="RefSeq" id="NP_001092056.1">
    <property type="nucleotide sequence ID" value="NM_001098586.1"/>
</dbReference>
<dbReference type="SMR" id="A5A769"/>
<dbReference type="FunCoup" id="A5A769">
    <property type="interactions" value="733"/>
</dbReference>
<dbReference type="GlyGen" id="A5A769">
    <property type="glycosylation" value="1 site"/>
</dbReference>
<dbReference type="PeptideAtlas" id="A5A769"/>
<dbReference type="Ensembl" id="ENSSSCT00025061038.1">
    <property type="protein sequence ID" value="ENSSSCP00025025915.1"/>
    <property type="gene ID" value="ENSSSCG00025044967.1"/>
</dbReference>
<dbReference type="Ensembl" id="ENSSSCT00030085207.1">
    <property type="protein sequence ID" value="ENSSSCP00030039255.1"/>
    <property type="gene ID" value="ENSSSCG00030060981.1"/>
</dbReference>
<dbReference type="Ensembl" id="ENSSSCT00035094143.1">
    <property type="protein sequence ID" value="ENSSSCP00035039538.1"/>
    <property type="gene ID" value="ENSSSCG00035069690.1"/>
</dbReference>
<dbReference type="Ensembl" id="ENSSSCT00040084782.1">
    <property type="protein sequence ID" value="ENSSSCP00040037012.1"/>
    <property type="gene ID" value="ENSSSCG00040062269.1"/>
</dbReference>
<dbReference type="Ensembl" id="ENSSSCT00045063826.1">
    <property type="protein sequence ID" value="ENSSSCP00045045045.1"/>
    <property type="gene ID" value="ENSSSCG00045037037.1"/>
</dbReference>
<dbReference type="Ensembl" id="ENSSSCT00050066582.1">
    <property type="protein sequence ID" value="ENSSSCP00050028612.1"/>
    <property type="gene ID" value="ENSSSCG00050048921.1"/>
</dbReference>
<dbReference type="Ensembl" id="ENSSSCT00055023600.1">
    <property type="protein sequence ID" value="ENSSSCP00055018662.1"/>
    <property type="gene ID" value="ENSSSCG00055012069.1"/>
</dbReference>
<dbReference type="Ensembl" id="ENSSSCT00060037966.1">
    <property type="protein sequence ID" value="ENSSSCP00060016144.1"/>
    <property type="gene ID" value="ENSSSCG00060028062.1"/>
</dbReference>
<dbReference type="Ensembl" id="ENSSSCT00065001617.1">
    <property type="protein sequence ID" value="ENSSSCP00065000497.1"/>
    <property type="gene ID" value="ENSSSCG00065001328.1"/>
</dbReference>
<dbReference type="Ensembl" id="ENSSSCT00105079237">
    <property type="protein sequence ID" value="ENSSSCP00105056278"/>
    <property type="gene ID" value="ENSSSCG00105041578"/>
</dbReference>
<dbReference type="Ensembl" id="ENSSSCT00110068204">
    <property type="protein sequence ID" value="ENSSSCP00110048054"/>
    <property type="gene ID" value="ENSSSCG00110035868"/>
</dbReference>
<dbReference type="Ensembl" id="ENSSSCT00115037109">
    <property type="protein sequence ID" value="ENSSSCP00115035087"/>
    <property type="gene ID" value="ENSSSCG00115020955"/>
</dbReference>
<dbReference type="Ensembl" id="ENSSSCT00130062868">
    <property type="protein sequence ID" value="ENSSSCP00130045043"/>
    <property type="gene ID" value="ENSSSCG00130032211"/>
</dbReference>
<dbReference type="GeneID" id="100049671"/>
<dbReference type="KEGG" id="ssc:100049671"/>
<dbReference type="CTD" id="388552"/>
<dbReference type="InParanoid" id="A5A769"/>
<dbReference type="OrthoDB" id="5984572at2759"/>
<dbReference type="Reactome" id="R-SSC-432722">
    <property type="pathway name" value="Golgi Associated Vesicle Biogenesis"/>
</dbReference>
<dbReference type="Proteomes" id="UP000008227">
    <property type="component" value="Unplaced"/>
</dbReference>
<dbReference type="Proteomes" id="UP000314985">
    <property type="component" value="Unplaced"/>
</dbReference>
<dbReference type="Proteomes" id="UP000694570">
    <property type="component" value="Unplaced"/>
</dbReference>
<dbReference type="Proteomes" id="UP000694571">
    <property type="component" value="Unplaced"/>
</dbReference>
<dbReference type="Proteomes" id="UP000694720">
    <property type="component" value="Unplaced"/>
</dbReference>
<dbReference type="Proteomes" id="UP000694722">
    <property type="component" value="Unplaced"/>
</dbReference>
<dbReference type="Proteomes" id="UP000694723">
    <property type="component" value="Unplaced"/>
</dbReference>
<dbReference type="Proteomes" id="UP000694724">
    <property type="component" value="Unplaced"/>
</dbReference>
<dbReference type="Proteomes" id="UP000694725">
    <property type="component" value="Unplaced"/>
</dbReference>
<dbReference type="Proteomes" id="UP000694726">
    <property type="component" value="Unplaced"/>
</dbReference>
<dbReference type="Proteomes" id="UP000694727">
    <property type="component" value="Unplaced"/>
</dbReference>
<dbReference type="Proteomes" id="UP000694728">
    <property type="component" value="Unplaced"/>
</dbReference>
<dbReference type="GO" id="GO:1904115">
    <property type="term" value="C:axon cytoplasm"/>
    <property type="evidence" value="ECO:0007669"/>
    <property type="project" value="GOC"/>
</dbReference>
<dbReference type="GO" id="GO:0031083">
    <property type="term" value="C:BLOC-1 complex"/>
    <property type="evidence" value="ECO:0000250"/>
    <property type="project" value="UniProtKB"/>
</dbReference>
<dbReference type="GO" id="GO:0030133">
    <property type="term" value="C:transport vesicle"/>
    <property type="evidence" value="ECO:0000250"/>
    <property type="project" value="UniProtKB"/>
</dbReference>
<dbReference type="GO" id="GO:0008089">
    <property type="term" value="P:anterograde axonal transport"/>
    <property type="evidence" value="ECO:0000250"/>
    <property type="project" value="UniProtKB"/>
</dbReference>
<dbReference type="GO" id="GO:0048490">
    <property type="term" value="P:anterograde synaptic vesicle transport"/>
    <property type="evidence" value="ECO:0000250"/>
    <property type="project" value="UniProtKB"/>
</dbReference>
<dbReference type="GO" id="GO:0035646">
    <property type="term" value="P:endosome to melanosome transport"/>
    <property type="evidence" value="ECO:0000250"/>
    <property type="project" value="UniProtKB"/>
</dbReference>
<dbReference type="GO" id="GO:0032402">
    <property type="term" value="P:melanosome transport"/>
    <property type="evidence" value="ECO:0000250"/>
    <property type="project" value="UniProtKB"/>
</dbReference>
<dbReference type="GO" id="GO:0031175">
    <property type="term" value="P:neuron projection development"/>
    <property type="evidence" value="ECO:0000250"/>
    <property type="project" value="UniProtKB"/>
</dbReference>
<dbReference type="InterPro" id="IPR017245">
    <property type="entry name" value="BLOC-1_complex_su-3"/>
</dbReference>
<dbReference type="PANTHER" id="PTHR31974">
    <property type="entry name" value="BIOGENESIS OF LYSOSOME-RELATED ORGANELLES COMPLEX 1 SUBUNIT 3"/>
    <property type="match status" value="1"/>
</dbReference>
<dbReference type="PANTHER" id="PTHR31974:SF2">
    <property type="entry name" value="BIOGENESIS OF LYSOSOME-RELATED ORGANELLES COMPLEX 1 SUBUNIT 3"/>
    <property type="match status" value="1"/>
</dbReference>
<dbReference type="Pfam" id="PF15753">
    <property type="entry name" value="BLOC1S3"/>
    <property type="match status" value="1"/>
</dbReference>
<dbReference type="PIRSF" id="PIRSF037630">
    <property type="entry name" value="BLOC-1_complex_subunit_3"/>
    <property type="match status" value="1"/>
</dbReference>
<organism>
    <name type="scientific">Sus scrofa</name>
    <name type="common">Pig</name>
    <dbReference type="NCBI Taxonomy" id="9823"/>
    <lineage>
        <taxon>Eukaryota</taxon>
        <taxon>Metazoa</taxon>
        <taxon>Chordata</taxon>
        <taxon>Craniata</taxon>
        <taxon>Vertebrata</taxon>
        <taxon>Euteleostomi</taxon>
        <taxon>Mammalia</taxon>
        <taxon>Eutheria</taxon>
        <taxon>Laurasiatheria</taxon>
        <taxon>Artiodactyla</taxon>
        <taxon>Suina</taxon>
        <taxon>Suidae</taxon>
        <taxon>Sus</taxon>
    </lineage>
</organism>
<protein>
    <recommendedName>
        <fullName>Biogenesis of lysosome-related organelles complex 1 subunit 3</fullName>
        <shortName>BLOC-1 subunit 3</shortName>
    </recommendedName>
</protein>
<evidence type="ECO:0000250" key="1"/>
<evidence type="ECO:0000250" key="2">
    <source>
        <dbReference type="UniProtKB" id="Q6QNY0"/>
    </source>
</evidence>
<evidence type="ECO:0000256" key="3">
    <source>
        <dbReference type="SAM" id="MobiDB-lite"/>
    </source>
</evidence>
<evidence type="ECO:0000305" key="4"/>
<gene>
    <name type="primary">BLOC1S3</name>
</gene>
<keyword id="KW-0963">Cytoplasm</keyword>
<keyword id="KW-0597">Phosphoprotein</keyword>
<keyword id="KW-1185">Reference proteome</keyword>
<feature type="chain" id="PRO_0000342165" description="Biogenesis of lysosome-related organelles complex 1 subunit 3">
    <location>
        <begin position="1"/>
        <end position="199"/>
    </location>
</feature>
<feature type="region of interest" description="Disordered" evidence="3">
    <location>
        <begin position="1"/>
        <end position="81"/>
    </location>
</feature>
<feature type="compositionally biased region" description="Basic residues" evidence="3">
    <location>
        <begin position="1"/>
        <end position="11"/>
    </location>
</feature>
<feature type="compositionally biased region" description="Acidic residues" evidence="3">
    <location>
        <begin position="23"/>
        <end position="38"/>
    </location>
</feature>
<feature type="compositionally biased region" description="Low complexity" evidence="3">
    <location>
        <begin position="39"/>
        <end position="54"/>
    </location>
</feature>
<feature type="modified residue" description="Phosphothreonine" evidence="2">
    <location>
        <position position="62"/>
    </location>
</feature>
<feature type="modified residue" description="Phosphoserine" evidence="2">
    <location>
        <position position="64"/>
    </location>
</feature>
<comment type="function">
    <text evidence="1">Component of the BLOC-1 complex, a complex that is required for normal biogenesis of lysosome-related organelles (LRO), such as platelet dense granules and melanosomes. In concert with the AP-3 complex, the BLOC-1 complex is required to target membrane protein cargos into vesicles assembled at cell bodies for delivery into neurites and nerve terminals. The BLOC-1 complex, in association with SNARE proteins, is also proposed to be involved in neurite extension. Plays a role in intracellular vesicle trafficking (By similarity).</text>
</comment>
<comment type="subunit">
    <text evidence="1">Component of the biogenesis of lysosome-related organelles complex 1 (BLOC-1) composed of BLOC1S1, BLOC1S2, BLOC1S3, BLOC1S4, BLOC1S5, BLOC1S6, DTNBP1/BLOC1S7 and SNAPIN/BLOC1S8. Octamer composed of one copy each BLOC1S1, BLOC1S2, BLOC1S3, BLOC1S4, BLOC1S5, BLOC1S6, DTNBP1/BLOC1S7 and SNAPIN/BLOC1S8. The BLOC-1 complex associates with the AP-3 protein complex and membrane protein cargos. Interacts directly with BLOC1S2. Interacts with BLOC1S4, BLOC1S5 and BLOC1S6 (By similarity).</text>
</comment>
<comment type="subcellular location">
    <subcellularLocation>
        <location evidence="1">Cytoplasm</location>
    </subcellularLocation>
</comment>
<comment type="PTM">
    <text evidence="1">Phosphorylated.</text>
</comment>
<comment type="similarity">
    <text evidence="4">Belongs to the BLOC1S3 family.</text>
</comment>